<name>AT134_CHICK</name>
<organism>
    <name type="scientific">Gallus gallus</name>
    <name type="common">Chicken</name>
    <dbReference type="NCBI Taxonomy" id="9031"/>
    <lineage>
        <taxon>Eukaryota</taxon>
        <taxon>Metazoa</taxon>
        <taxon>Chordata</taxon>
        <taxon>Craniata</taxon>
        <taxon>Vertebrata</taxon>
        <taxon>Euteleostomi</taxon>
        <taxon>Archelosauria</taxon>
        <taxon>Archosauria</taxon>
        <taxon>Dinosauria</taxon>
        <taxon>Saurischia</taxon>
        <taxon>Theropoda</taxon>
        <taxon>Coelurosauria</taxon>
        <taxon>Aves</taxon>
        <taxon>Neognathae</taxon>
        <taxon>Galloanserae</taxon>
        <taxon>Galliformes</taxon>
        <taxon>Phasianidae</taxon>
        <taxon>Phasianinae</taxon>
        <taxon>Gallus</taxon>
    </lineage>
</organism>
<reference key="1">
    <citation type="journal article" date="2005" name="Genome Biol.">
        <title>Full-length cDNAs from chicken bursal lymphocytes to facilitate gene function analysis.</title>
        <authorList>
            <person name="Caldwell R.B."/>
            <person name="Kierzek A.M."/>
            <person name="Arakawa H."/>
            <person name="Bezzubov Y."/>
            <person name="Zaim J."/>
            <person name="Fiedler P."/>
            <person name="Kutter S."/>
            <person name="Blagodatski A."/>
            <person name="Kostovska D."/>
            <person name="Koter M."/>
            <person name="Plachy J."/>
            <person name="Carninci P."/>
            <person name="Hayashizaki Y."/>
            <person name="Buerstedde J.-M."/>
        </authorList>
    </citation>
    <scope>NUCLEOTIDE SEQUENCE [LARGE SCALE MRNA]</scope>
    <source>
        <strain>CB</strain>
        <tissue>Bursa of Fabricius</tissue>
    </source>
</reference>
<accession>Q5ZKB7</accession>
<evidence type="ECO:0000250" key="1"/>
<evidence type="ECO:0000255" key="2"/>
<evidence type="ECO:0000305" key="3"/>
<sequence>MGENPAKSHYAQLNLGEENEMEIFGYKTQCCRKALCIAGYILSCGALLLLFYWKPEWDVWANCVPCSLEEADVVLLRTTDEFRIYSRKNVTWISVSGIIKSRLDYPSFAEEDSIFSKALMKPSLQVKSIQVQKIRYVWNIYAKQFQKVGALEDHHTCSAIHTKFGSGLTCSEQSLRRVICGPNTIDVPVIPIWKLLIKEVLNPFYVFQLFSVCLWFAEDYMEYAAAIIIMSPLSISLTVYDLRQQSVKLQRLVESHNSIMVTGRNKEGFQELESHHLVPGDMVVLKEGKALLPCDAILISGQCIVNESMLTGESIPVTKTQLPQADNLKPWKMHCAEDYKKHVLFCGTEVIQTKGDDRGVVKAVVLQTGFNTAKGDLVRSILYPKPMNFRLYRDALRFLMCLIAFAAIGMIYTVCVFALNGEEAGEVVKKALDVITIAVPPALPAALTTGIIYTQRRLKKKGIFCISPQRINMCGQLNLICFDKTGTLTEDGLDLWGLLPSEGNCFQDVRRFPADHSLPWGPAFRAMVVCHSLIVLEGKIQGDPLDVKMFEATNWVIDDSSGHQIEGQRSTHATVIRPGPKANTASVDGITILHQFPFSSALQRMSVIAQETGGEKQAFTKGAPEMVATLCRAETVPSNFESKLLFYTAQGFRVIGLAYKSLQSGKQSTDLTREEVESDLTFLGLLIMENRLKRETKPVLEELSAAHIRSVMVTGDNIQTAVTVAKNAGMISPTNRVILVEANKIPGSFSASVTWKPLKENKTEDDGNLDSGSQTGRRIRLAAEPGQFHFAMSGKSYQVVAQYFSHLLPKLLLNATVFARMSPSQKSSLVEEFQKLDYFVGMCGDGANDCGALKVAHAGISLSEQEASVASPFTSRTPSIACVPELIREGRAALVTSFCMFKYMALYSTIQYLGVLLLYWQLNSFGNYQFLFQDLAITTVIGMTMSFTEAYPKLVPYRPPSQLVSPPLLLSVILNILFSLGMQILGFLMVQKQPWYSKTDIHSACLSVNNHVENSSSASSLGLHGVGGGDPTEVDNGYKSYENTTVWLLSTINCLIIALVFSKGKPFRQPIYTNYVFIMVLVGQLGVCLFLVFADIDDLYSKMDLVCTPTTWRISMVMMLAVTLAVSFLVEEAIIENRALWLWLKKTFQYHSKSHYKRLQRVLEQDSAWPPLNETFSLDAVTVSVEEDMEGHSNPTFDSNEDAL</sequence>
<proteinExistence type="evidence at transcript level"/>
<dbReference type="EC" id="7.2.2.-"/>
<dbReference type="EMBL" id="AJ720167">
    <property type="protein sequence ID" value="CAG31826.1"/>
    <property type="molecule type" value="mRNA"/>
</dbReference>
<dbReference type="RefSeq" id="NP_001026485.1">
    <property type="nucleotide sequence ID" value="NM_001031314.1"/>
</dbReference>
<dbReference type="SMR" id="Q5ZKB7"/>
<dbReference type="FunCoup" id="Q5ZKB7">
    <property type="interactions" value="966"/>
</dbReference>
<dbReference type="STRING" id="9031.ENSGALP00000011610"/>
<dbReference type="GlyGen" id="Q5ZKB7">
    <property type="glycosylation" value="1 site"/>
</dbReference>
<dbReference type="PaxDb" id="9031-ENSGALP00000011610"/>
<dbReference type="GeneID" id="424901"/>
<dbReference type="KEGG" id="gga:424901"/>
<dbReference type="CTD" id="84239"/>
<dbReference type="VEuPathDB" id="HostDB:geneid_424901"/>
<dbReference type="eggNOG" id="KOG0208">
    <property type="taxonomic scope" value="Eukaryota"/>
</dbReference>
<dbReference type="InParanoid" id="Q5ZKB7"/>
<dbReference type="OrthoDB" id="48943at2759"/>
<dbReference type="PhylomeDB" id="Q5ZKB7"/>
<dbReference type="PRO" id="PR:Q5ZKB7"/>
<dbReference type="Proteomes" id="UP000000539">
    <property type="component" value="Unassembled WGS sequence"/>
</dbReference>
<dbReference type="GO" id="GO:0005789">
    <property type="term" value="C:endoplasmic reticulum membrane"/>
    <property type="evidence" value="ECO:0000318"/>
    <property type="project" value="GO_Central"/>
</dbReference>
<dbReference type="GO" id="GO:0031902">
    <property type="term" value="C:late endosome membrane"/>
    <property type="evidence" value="ECO:0000318"/>
    <property type="project" value="GO_Central"/>
</dbReference>
<dbReference type="GO" id="GO:0005524">
    <property type="term" value="F:ATP binding"/>
    <property type="evidence" value="ECO:0007669"/>
    <property type="project" value="UniProtKB-KW"/>
</dbReference>
<dbReference type="GO" id="GO:0016887">
    <property type="term" value="F:ATP hydrolysis activity"/>
    <property type="evidence" value="ECO:0007669"/>
    <property type="project" value="InterPro"/>
</dbReference>
<dbReference type="GO" id="GO:0019829">
    <property type="term" value="F:ATPase-coupled monoatomic cation transmembrane transporter activity"/>
    <property type="evidence" value="ECO:0000318"/>
    <property type="project" value="GO_Central"/>
</dbReference>
<dbReference type="GO" id="GO:0046872">
    <property type="term" value="F:metal ion binding"/>
    <property type="evidence" value="ECO:0007669"/>
    <property type="project" value="UniProtKB-KW"/>
</dbReference>
<dbReference type="GO" id="GO:0015662">
    <property type="term" value="F:P-type ion transporter activity"/>
    <property type="evidence" value="ECO:0007669"/>
    <property type="project" value="InterPro"/>
</dbReference>
<dbReference type="GO" id="GO:0015203">
    <property type="term" value="F:polyamine transmembrane transporter activity"/>
    <property type="evidence" value="ECO:0000318"/>
    <property type="project" value="GO_Central"/>
</dbReference>
<dbReference type="GO" id="GO:0006874">
    <property type="term" value="P:intracellular calcium ion homeostasis"/>
    <property type="evidence" value="ECO:0000318"/>
    <property type="project" value="GO_Central"/>
</dbReference>
<dbReference type="GO" id="GO:1902047">
    <property type="term" value="P:polyamine transmembrane transport"/>
    <property type="evidence" value="ECO:0000318"/>
    <property type="project" value="GO_Central"/>
</dbReference>
<dbReference type="CDD" id="cd07542">
    <property type="entry name" value="P-type_ATPase_cation"/>
    <property type="match status" value="1"/>
</dbReference>
<dbReference type="FunFam" id="1.20.1110.10:FF:000023">
    <property type="entry name" value="Cation-transporting ATPase"/>
    <property type="match status" value="1"/>
</dbReference>
<dbReference type="FunFam" id="2.70.150.10:FF:000035">
    <property type="entry name" value="Cation-transporting ATPase"/>
    <property type="match status" value="1"/>
</dbReference>
<dbReference type="FunFam" id="3.40.50.1000:FF:000075">
    <property type="entry name" value="Cation-transporting ATPase"/>
    <property type="match status" value="1"/>
</dbReference>
<dbReference type="Gene3D" id="3.40.1110.10">
    <property type="entry name" value="Calcium-transporting ATPase, cytoplasmic domain N"/>
    <property type="match status" value="1"/>
</dbReference>
<dbReference type="Gene3D" id="2.70.150.10">
    <property type="entry name" value="Calcium-transporting ATPase, cytoplasmic transduction domain A"/>
    <property type="match status" value="1"/>
</dbReference>
<dbReference type="Gene3D" id="1.20.1110.10">
    <property type="entry name" value="Calcium-transporting ATPase, transmembrane domain"/>
    <property type="match status" value="1"/>
</dbReference>
<dbReference type="Gene3D" id="3.40.50.1000">
    <property type="entry name" value="HAD superfamily/HAD-like"/>
    <property type="match status" value="2"/>
</dbReference>
<dbReference type="InterPro" id="IPR004014">
    <property type="entry name" value="ATPase_P-typ_cation-transptr_N"/>
</dbReference>
<dbReference type="InterPro" id="IPR023299">
    <property type="entry name" value="ATPase_P-typ_cyto_dom_N"/>
</dbReference>
<dbReference type="InterPro" id="IPR018303">
    <property type="entry name" value="ATPase_P-typ_P_site"/>
</dbReference>
<dbReference type="InterPro" id="IPR023298">
    <property type="entry name" value="ATPase_P-typ_TM_dom_sf"/>
</dbReference>
<dbReference type="InterPro" id="IPR008250">
    <property type="entry name" value="ATPase_P-typ_transduc_dom_A_sf"/>
</dbReference>
<dbReference type="InterPro" id="IPR036412">
    <property type="entry name" value="HAD-like_sf"/>
</dbReference>
<dbReference type="InterPro" id="IPR023214">
    <property type="entry name" value="HAD_sf"/>
</dbReference>
<dbReference type="InterPro" id="IPR006544">
    <property type="entry name" value="P-type_TPase_V"/>
</dbReference>
<dbReference type="InterPro" id="IPR047819">
    <property type="entry name" value="P5A-ATPase_N"/>
</dbReference>
<dbReference type="InterPro" id="IPR047821">
    <property type="entry name" value="P5B-type_ATPase"/>
</dbReference>
<dbReference type="InterPro" id="IPR001757">
    <property type="entry name" value="P_typ_ATPase"/>
</dbReference>
<dbReference type="InterPro" id="IPR044492">
    <property type="entry name" value="P_typ_ATPase_HD_dom"/>
</dbReference>
<dbReference type="NCBIfam" id="TIGR01494">
    <property type="entry name" value="ATPase_P-type"/>
    <property type="match status" value="3"/>
</dbReference>
<dbReference type="NCBIfam" id="TIGR01657">
    <property type="entry name" value="P-ATPase-V"/>
    <property type="match status" value="1"/>
</dbReference>
<dbReference type="PANTHER" id="PTHR45630:SF1">
    <property type="entry name" value="CATION-TRANSPORTING ATPASE 13A4-RELATED"/>
    <property type="match status" value="1"/>
</dbReference>
<dbReference type="PANTHER" id="PTHR45630">
    <property type="entry name" value="CATION-TRANSPORTING ATPASE-RELATED"/>
    <property type="match status" value="1"/>
</dbReference>
<dbReference type="Pfam" id="PF13246">
    <property type="entry name" value="Cation_ATPase"/>
    <property type="match status" value="1"/>
</dbReference>
<dbReference type="Pfam" id="PF00690">
    <property type="entry name" value="Cation_ATPase_N"/>
    <property type="match status" value="1"/>
</dbReference>
<dbReference type="Pfam" id="PF00122">
    <property type="entry name" value="E1-E2_ATPase"/>
    <property type="match status" value="1"/>
</dbReference>
<dbReference type="Pfam" id="PF12409">
    <property type="entry name" value="P5-ATPase"/>
    <property type="match status" value="1"/>
</dbReference>
<dbReference type="PRINTS" id="PR00119">
    <property type="entry name" value="CATATPASE"/>
</dbReference>
<dbReference type="SFLD" id="SFLDS00003">
    <property type="entry name" value="Haloacid_Dehalogenase"/>
    <property type="match status" value="1"/>
</dbReference>
<dbReference type="SFLD" id="SFLDF00027">
    <property type="entry name" value="p-type_atpase"/>
    <property type="match status" value="1"/>
</dbReference>
<dbReference type="SMART" id="SM00831">
    <property type="entry name" value="Cation_ATPase_N"/>
    <property type="match status" value="1"/>
</dbReference>
<dbReference type="SUPFAM" id="SSF81653">
    <property type="entry name" value="Calcium ATPase, transduction domain A"/>
    <property type="match status" value="1"/>
</dbReference>
<dbReference type="SUPFAM" id="SSF81665">
    <property type="entry name" value="Calcium ATPase, transmembrane domain M"/>
    <property type="match status" value="1"/>
</dbReference>
<dbReference type="SUPFAM" id="SSF56784">
    <property type="entry name" value="HAD-like"/>
    <property type="match status" value="1"/>
</dbReference>
<dbReference type="SUPFAM" id="SSF81660">
    <property type="entry name" value="Metal cation-transporting ATPase, ATP-binding domain N"/>
    <property type="match status" value="1"/>
</dbReference>
<dbReference type="PROSITE" id="PS00154">
    <property type="entry name" value="ATPASE_E1_E2"/>
    <property type="match status" value="1"/>
</dbReference>
<protein>
    <recommendedName>
        <fullName>Probable cation-transporting ATPase 13A4</fullName>
        <ecNumber>7.2.2.-</ecNumber>
    </recommendedName>
    <alternativeName>
        <fullName>P5-ATPase isoform 4</fullName>
    </alternativeName>
</protein>
<feature type="chain" id="PRO_0000318677" description="Probable cation-transporting ATPase 13A4">
    <location>
        <begin position="1"/>
        <end position="1204"/>
    </location>
</feature>
<feature type="topological domain" description="Cytoplasmic" evidence="2">
    <location>
        <begin position="1"/>
        <end position="32"/>
    </location>
</feature>
<feature type="transmembrane region" description="Helical" evidence="2">
    <location>
        <begin position="33"/>
        <end position="53"/>
    </location>
</feature>
<feature type="topological domain" description="Extracellular" evidence="2">
    <location>
        <begin position="54"/>
        <end position="219"/>
    </location>
</feature>
<feature type="transmembrane region" description="Helical" evidence="2">
    <location>
        <begin position="220"/>
        <end position="242"/>
    </location>
</feature>
<feature type="topological domain" description="Cytoplasmic" evidence="2">
    <location>
        <begin position="243"/>
        <end position="397"/>
    </location>
</feature>
<feature type="transmembrane region" description="Helical" evidence="2">
    <location>
        <begin position="398"/>
        <end position="418"/>
    </location>
</feature>
<feature type="topological domain" description="Extracellular" evidence="2">
    <location>
        <begin position="419"/>
        <end position="433"/>
    </location>
</feature>
<feature type="transmembrane region" description="Helical" evidence="2">
    <location>
        <begin position="434"/>
        <end position="454"/>
    </location>
</feature>
<feature type="topological domain" description="Cytoplasmic" evidence="2">
    <location>
        <begin position="455"/>
        <end position="897"/>
    </location>
</feature>
<feature type="transmembrane region" description="Helical" evidence="2">
    <location>
        <begin position="898"/>
        <end position="918"/>
    </location>
</feature>
<feature type="topological domain" description="Extracellular" evidence="2">
    <location>
        <begin position="919"/>
        <end position="929"/>
    </location>
</feature>
<feature type="transmembrane region" description="Helical" evidence="2">
    <location>
        <begin position="930"/>
        <end position="950"/>
    </location>
</feature>
<feature type="topological domain" description="Cytoplasmic" evidence="2">
    <location>
        <begin position="951"/>
        <end position="967"/>
    </location>
</feature>
<feature type="transmembrane region" description="Helical" evidence="2">
    <location>
        <begin position="968"/>
        <end position="988"/>
    </location>
</feature>
<feature type="topological domain" description="Extracellular" evidence="2">
    <location>
        <begin position="989"/>
        <end position="1043"/>
    </location>
</feature>
<feature type="transmembrane region" description="Helical" evidence="2">
    <location>
        <begin position="1044"/>
        <end position="1064"/>
    </location>
</feature>
<feature type="topological domain" description="Cytoplasmic" evidence="2">
    <location>
        <begin position="1065"/>
        <end position="1075"/>
    </location>
</feature>
<feature type="transmembrane region" description="Helical" evidence="2">
    <location>
        <begin position="1076"/>
        <end position="1096"/>
    </location>
</feature>
<feature type="topological domain" description="Extracellular" evidence="2">
    <location>
        <begin position="1097"/>
        <end position="1113"/>
    </location>
</feature>
<feature type="transmembrane region" description="Helical" evidence="2">
    <location>
        <begin position="1114"/>
        <end position="1134"/>
    </location>
</feature>
<feature type="topological domain" description="Cytoplasmic" evidence="2">
    <location>
        <begin position="1135"/>
        <end position="1204"/>
    </location>
</feature>
<feature type="active site" description="4-aspartylphosphate intermediate" evidence="1">
    <location>
        <position position="483"/>
    </location>
</feature>
<feature type="binding site" evidence="1">
    <location>
        <position position="845"/>
    </location>
    <ligand>
        <name>Mg(2+)</name>
        <dbReference type="ChEBI" id="CHEBI:18420"/>
    </ligand>
</feature>
<feature type="binding site" evidence="1">
    <location>
        <position position="849"/>
    </location>
    <ligand>
        <name>Mg(2+)</name>
        <dbReference type="ChEBI" id="CHEBI:18420"/>
    </ligand>
</feature>
<comment type="catalytic activity">
    <reaction>
        <text>ATP + H2O = ADP + phosphate + H(+)</text>
        <dbReference type="Rhea" id="RHEA:13065"/>
        <dbReference type="ChEBI" id="CHEBI:15377"/>
        <dbReference type="ChEBI" id="CHEBI:15378"/>
        <dbReference type="ChEBI" id="CHEBI:30616"/>
        <dbReference type="ChEBI" id="CHEBI:43474"/>
        <dbReference type="ChEBI" id="CHEBI:456216"/>
    </reaction>
</comment>
<comment type="subcellular location">
    <subcellularLocation>
        <location evidence="3">Membrane</location>
        <topology evidence="3">Multi-pass membrane protein</topology>
    </subcellularLocation>
</comment>
<comment type="similarity">
    <text evidence="3">Belongs to the cation transport ATPase (P-type) (TC 3.A.3) family. Type V subfamily.</text>
</comment>
<gene>
    <name type="primary">ATP13A4</name>
    <name type="ORF">RCJMB04_11o9</name>
</gene>
<keyword id="KW-0067">ATP-binding</keyword>
<keyword id="KW-0460">Magnesium</keyword>
<keyword id="KW-0472">Membrane</keyword>
<keyword id="KW-0479">Metal-binding</keyword>
<keyword id="KW-0547">Nucleotide-binding</keyword>
<keyword id="KW-0597">Phosphoprotein</keyword>
<keyword id="KW-1185">Reference proteome</keyword>
<keyword id="KW-1278">Translocase</keyword>
<keyword id="KW-0812">Transmembrane</keyword>
<keyword id="KW-1133">Transmembrane helix</keyword>